<keyword id="KW-0240">DNA-directed RNA polymerase</keyword>
<keyword id="KW-0548">Nucleotidyltransferase</keyword>
<keyword id="KW-0804">Transcription</keyword>
<keyword id="KW-0808">Transferase</keyword>
<protein>
    <recommendedName>
        <fullName evidence="1">DNA-directed RNA polymerase subunit beta</fullName>
        <shortName evidence="1">RNAP subunit beta</shortName>
        <ecNumber evidence="1">2.7.7.6</ecNumber>
    </recommendedName>
    <alternativeName>
        <fullName evidence="1">RNA polymerase subunit beta</fullName>
    </alternativeName>
    <alternativeName>
        <fullName evidence="1">Transcriptase subunit beta</fullName>
    </alternativeName>
</protein>
<organism>
    <name type="scientific">Brucella abortus biovar 1 (strain 9-941)</name>
    <dbReference type="NCBI Taxonomy" id="262698"/>
    <lineage>
        <taxon>Bacteria</taxon>
        <taxon>Pseudomonadati</taxon>
        <taxon>Pseudomonadota</taxon>
        <taxon>Alphaproteobacteria</taxon>
        <taxon>Hyphomicrobiales</taxon>
        <taxon>Brucellaceae</taxon>
        <taxon>Brucella/Ochrobactrum group</taxon>
        <taxon>Brucella</taxon>
    </lineage>
</organism>
<name>RPOB_BRUAB</name>
<gene>
    <name evidence="1" type="primary">rpoB</name>
    <name type="ordered locus">BruAb1_1248</name>
</gene>
<evidence type="ECO:0000255" key="1">
    <source>
        <dbReference type="HAMAP-Rule" id="MF_01321"/>
    </source>
</evidence>
<reference key="1">
    <citation type="journal article" date="2005" name="J. Bacteriol.">
        <title>Completion of the genome sequence of Brucella abortus and comparison to the highly similar genomes of Brucella melitensis and Brucella suis.</title>
        <authorList>
            <person name="Halling S.M."/>
            <person name="Peterson-Burch B.D."/>
            <person name="Bricker B.J."/>
            <person name="Zuerner R.L."/>
            <person name="Qing Z."/>
            <person name="Li L.-L."/>
            <person name="Kapur V."/>
            <person name="Alt D.P."/>
            <person name="Olsen S.C."/>
        </authorList>
    </citation>
    <scope>NUCLEOTIDE SEQUENCE [LARGE SCALE GENOMIC DNA]</scope>
    <source>
        <strain>9-941</strain>
    </source>
</reference>
<proteinExistence type="inferred from homology"/>
<accession>Q57CP8</accession>
<feature type="chain" id="PRO_0000224035" description="DNA-directed RNA polymerase subunit beta">
    <location>
        <begin position="1"/>
        <end position="1377"/>
    </location>
</feature>
<comment type="function">
    <text evidence="1">DNA-dependent RNA polymerase catalyzes the transcription of DNA into RNA using the four ribonucleoside triphosphates as substrates.</text>
</comment>
<comment type="catalytic activity">
    <reaction evidence="1">
        <text>RNA(n) + a ribonucleoside 5'-triphosphate = RNA(n+1) + diphosphate</text>
        <dbReference type="Rhea" id="RHEA:21248"/>
        <dbReference type="Rhea" id="RHEA-COMP:14527"/>
        <dbReference type="Rhea" id="RHEA-COMP:17342"/>
        <dbReference type="ChEBI" id="CHEBI:33019"/>
        <dbReference type="ChEBI" id="CHEBI:61557"/>
        <dbReference type="ChEBI" id="CHEBI:140395"/>
        <dbReference type="EC" id="2.7.7.6"/>
    </reaction>
</comment>
<comment type="subunit">
    <text evidence="1">The RNAP catalytic core consists of 2 alpha, 1 beta, 1 beta' and 1 omega subunit. When a sigma factor is associated with the core the holoenzyme is formed, which can initiate transcription.</text>
</comment>
<comment type="similarity">
    <text evidence="1">Belongs to the RNA polymerase beta chain family.</text>
</comment>
<dbReference type="EC" id="2.7.7.6" evidence="1"/>
<dbReference type="EMBL" id="AE017223">
    <property type="protein sequence ID" value="AAX74586.1"/>
    <property type="molecule type" value="Genomic_DNA"/>
</dbReference>
<dbReference type="RefSeq" id="WP_002966855.1">
    <property type="nucleotide sequence ID" value="NC_006932.1"/>
</dbReference>
<dbReference type="SMR" id="Q57CP8"/>
<dbReference type="EnsemblBacteria" id="AAX74586">
    <property type="protein sequence ID" value="AAX74586"/>
    <property type="gene ID" value="BruAb1_1248"/>
</dbReference>
<dbReference type="GeneID" id="97533517"/>
<dbReference type="KEGG" id="bmb:BruAb1_1248"/>
<dbReference type="HOGENOM" id="CLU_000524_4_0_5"/>
<dbReference type="PRO" id="PR:Q57CP8"/>
<dbReference type="Proteomes" id="UP000000540">
    <property type="component" value="Chromosome I"/>
</dbReference>
<dbReference type="GO" id="GO:0000428">
    <property type="term" value="C:DNA-directed RNA polymerase complex"/>
    <property type="evidence" value="ECO:0007669"/>
    <property type="project" value="UniProtKB-KW"/>
</dbReference>
<dbReference type="GO" id="GO:0003677">
    <property type="term" value="F:DNA binding"/>
    <property type="evidence" value="ECO:0007669"/>
    <property type="project" value="UniProtKB-UniRule"/>
</dbReference>
<dbReference type="GO" id="GO:0003899">
    <property type="term" value="F:DNA-directed RNA polymerase activity"/>
    <property type="evidence" value="ECO:0007669"/>
    <property type="project" value="UniProtKB-UniRule"/>
</dbReference>
<dbReference type="GO" id="GO:0032549">
    <property type="term" value="F:ribonucleoside binding"/>
    <property type="evidence" value="ECO:0007669"/>
    <property type="project" value="InterPro"/>
</dbReference>
<dbReference type="GO" id="GO:0006351">
    <property type="term" value="P:DNA-templated transcription"/>
    <property type="evidence" value="ECO:0007669"/>
    <property type="project" value="UniProtKB-UniRule"/>
</dbReference>
<dbReference type="CDD" id="cd00653">
    <property type="entry name" value="RNA_pol_B_RPB2"/>
    <property type="match status" value="1"/>
</dbReference>
<dbReference type="FunFam" id="2.40.50.100:FF:000006">
    <property type="entry name" value="DNA-directed RNA polymerase subunit beta"/>
    <property type="match status" value="1"/>
</dbReference>
<dbReference type="FunFam" id="3.90.1800.10:FF:000001">
    <property type="entry name" value="DNA-directed RNA polymerase subunit beta"/>
    <property type="match status" value="1"/>
</dbReference>
<dbReference type="Gene3D" id="2.40.50.100">
    <property type="match status" value="1"/>
</dbReference>
<dbReference type="Gene3D" id="2.40.50.150">
    <property type="match status" value="1"/>
</dbReference>
<dbReference type="Gene3D" id="3.90.1100.10">
    <property type="match status" value="2"/>
</dbReference>
<dbReference type="Gene3D" id="2.30.150.10">
    <property type="entry name" value="DNA-directed RNA polymerase, beta subunit, external 1 domain"/>
    <property type="match status" value="1"/>
</dbReference>
<dbReference type="Gene3D" id="2.40.270.10">
    <property type="entry name" value="DNA-directed RNA polymerase, subunit 2, domain 6"/>
    <property type="match status" value="2"/>
</dbReference>
<dbReference type="Gene3D" id="3.90.1800.10">
    <property type="entry name" value="RNA polymerase alpha subunit dimerisation domain"/>
    <property type="match status" value="1"/>
</dbReference>
<dbReference type="Gene3D" id="3.90.1110.10">
    <property type="entry name" value="RNA polymerase Rpb2, domain 2"/>
    <property type="match status" value="2"/>
</dbReference>
<dbReference type="HAMAP" id="MF_01321">
    <property type="entry name" value="RNApol_bact_RpoB"/>
    <property type="match status" value="1"/>
</dbReference>
<dbReference type="InterPro" id="IPR042107">
    <property type="entry name" value="DNA-dir_RNA_pol_bsu_ext_1_sf"/>
</dbReference>
<dbReference type="InterPro" id="IPR019462">
    <property type="entry name" value="DNA-dir_RNA_pol_bsu_external_1"/>
</dbReference>
<dbReference type="InterPro" id="IPR015712">
    <property type="entry name" value="DNA-dir_RNA_pol_su2"/>
</dbReference>
<dbReference type="InterPro" id="IPR007120">
    <property type="entry name" value="DNA-dir_RNAP_su2_dom"/>
</dbReference>
<dbReference type="InterPro" id="IPR037033">
    <property type="entry name" value="DNA-dir_RNAP_su2_hyb_sf"/>
</dbReference>
<dbReference type="InterPro" id="IPR010243">
    <property type="entry name" value="RNA_pol_bsu_bac"/>
</dbReference>
<dbReference type="InterPro" id="IPR007121">
    <property type="entry name" value="RNA_pol_bsu_CS"/>
</dbReference>
<dbReference type="InterPro" id="IPR007644">
    <property type="entry name" value="RNA_pol_bsu_protrusion"/>
</dbReference>
<dbReference type="InterPro" id="IPR007642">
    <property type="entry name" value="RNA_pol_Rpb2_2"/>
</dbReference>
<dbReference type="InterPro" id="IPR037034">
    <property type="entry name" value="RNA_pol_Rpb2_2_sf"/>
</dbReference>
<dbReference type="InterPro" id="IPR007645">
    <property type="entry name" value="RNA_pol_Rpb2_3"/>
</dbReference>
<dbReference type="InterPro" id="IPR007641">
    <property type="entry name" value="RNA_pol_Rpb2_7"/>
</dbReference>
<dbReference type="InterPro" id="IPR014724">
    <property type="entry name" value="RNA_pol_RPB2_OB-fold"/>
</dbReference>
<dbReference type="NCBIfam" id="NF001616">
    <property type="entry name" value="PRK00405.1"/>
    <property type="match status" value="1"/>
</dbReference>
<dbReference type="NCBIfam" id="TIGR02013">
    <property type="entry name" value="rpoB"/>
    <property type="match status" value="1"/>
</dbReference>
<dbReference type="PANTHER" id="PTHR20856">
    <property type="entry name" value="DNA-DIRECTED RNA POLYMERASE I SUBUNIT 2"/>
    <property type="match status" value="1"/>
</dbReference>
<dbReference type="Pfam" id="PF04563">
    <property type="entry name" value="RNA_pol_Rpb2_1"/>
    <property type="match status" value="1"/>
</dbReference>
<dbReference type="Pfam" id="PF04561">
    <property type="entry name" value="RNA_pol_Rpb2_2"/>
    <property type="match status" value="2"/>
</dbReference>
<dbReference type="Pfam" id="PF04565">
    <property type="entry name" value="RNA_pol_Rpb2_3"/>
    <property type="match status" value="1"/>
</dbReference>
<dbReference type="Pfam" id="PF10385">
    <property type="entry name" value="RNA_pol_Rpb2_45"/>
    <property type="match status" value="1"/>
</dbReference>
<dbReference type="Pfam" id="PF00562">
    <property type="entry name" value="RNA_pol_Rpb2_6"/>
    <property type="match status" value="1"/>
</dbReference>
<dbReference type="Pfam" id="PF04560">
    <property type="entry name" value="RNA_pol_Rpb2_7"/>
    <property type="match status" value="1"/>
</dbReference>
<dbReference type="SUPFAM" id="SSF64484">
    <property type="entry name" value="beta and beta-prime subunits of DNA dependent RNA-polymerase"/>
    <property type="match status" value="1"/>
</dbReference>
<dbReference type="PROSITE" id="PS01166">
    <property type="entry name" value="RNA_POL_BETA"/>
    <property type="match status" value="1"/>
</dbReference>
<sequence>MAQTHSFNGRKRVRKFFGKIPEVAEMPNLIEVQKASYDQFLMVEEPSGGRPDEGLQAVFKSVFPIQDFSGASMLEFVRYEFDPPKFDVDECRQRDLTYSAPLKVTLRLIVFDIDEDTGAKSIKDIKEQDVYMGDMPLMTDNGTFIVNGTERVIVSQMHRSPGVFFDHDKGKTHSSGKLLFAARVIPYRGSWLDIEFDSKDIVYARIDRRRKLPATTLLMALGMDGEEILSTFYKTVTYTRDGDNWRIPYSAERFKGMKIISDLVDADTGEVVLEAGKKLTARAAKQLAEKGLKAIKATEDDLFGSYLAEDVVNYATGEIYLEAGDEIDEKVLKTLIDTGETEINVLDIDHVNIGAYIRNTLAVDKNESRQEALFDIYRVMRPGEPPTMDSAEAMFHSLFFDSERYDLSAVGRVKMNMRLDLDAEDTVRVLRKEDILAVVKMLVELRDGRGEIDDIDNLGNRRVRSVGELMENQYRVGLLRMERAIKERMSSIEIDTVMPQDLINAKPAAAAVREFFGSSQLSQFMDQTNPLSEITHKRRLSALGPGGLTRERAGFEVRDVHPTHYGRICPIETPEGPNIGLINSLATFARVNKYGFIESPYRKVVDGKVTNDVVYLSAMEEAKHSVAQANVELDEQGGFVDEFVICRHAGEVMMAPRENVDLMDVSPKQLVSVAAALIPFLENDDANRALMGSNMQRQAVPLVRAEAPFVGTGMEPIVARDSGAAIAARRGGIVDQVDATRIVIRATEELDPSKSGVDIYRLQKFQRSNQSTCINQRPLVRVGDRIHKGDIIADGPSTDLGDLALGRNVLVAFMPWNGYNYEDSILLSEKIVSDDVFTSIHIEEFEVAARDTKLGPEEITRDIPNVSEEALKNLDEAGIVYIGAEVHPGDILVGKITPKGESPMTPEEKLLRAIFGEKASDVRDTSMRMPPGTYGTVVEVRVFNRHGVEKDERAMAIEREEIERLAKDRDDEQAILDRNVYGRLADMIDGKVAAAGPKGFKKGTTITRELMTEYPRSQWWQFAVEDEKLQGELEALRSQYDDSKKLLEARFMDKVEKVQRGDEMPPGVMKMVKVFVAVKRKIQPGDKMAGRHGNKGVVSRILPVEDMPFLEDGTHADIVLNPLGVPSRMNVGQILETHLGWACAGMGKKIGELLDVYRKTANIEPLRQTLEHIYPDNDRNEPVRSYDDDAILMLANQVKRGVSIATPVFDGAVEADINAMLTDAGLATSGQSTLYDGRTGEPFDRQVTMGYIYMLKLHHLVDDKIHARSIGPYSLVTQQPLGGKAQFGGQRFGEMEVWALEAYGAAYTLQEMLTVKSDDVAGRTKVYEAIVRGDDTFEAGIPESFNVLVKEMRSLGLNVELDDTREAEQPALPDAAE</sequence>